<protein>
    <recommendedName>
        <fullName>Uncharacterized protein ORF15</fullName>
    </recommendedName>
</protein>
<organism>
    <name type="scientific">Fowl adenovirus A serotype 1 (strain CELO / Phelps)</name>
    <name type="common">FAdV-1</name>
    <name type="synonym">Avian adenovirus gal1 (strain Phelps)</name>
    <dbReference type="NCBI Taxonomy" id="10553"/>
    <lineage>
        <taxon>Viruses</taxon>
        <taxon>Varidnaviria</taxon>
        <taxon>Bamfordvirae</taxon>
        <taxon>Preplasmiviricota</taxon>
        <taxon>Tectiliviricetes</taxon>
        <taxon>Rowavirales</taxon>
        <taxon>Adenoviridae</taxon>
        <taxon>Aviadenovirus</taxon>
        <taxon>Fowl aviadenovirus A</taxon>
    </lineage>
</organism>
<name>YO15_ADEG1</name>
<gene>
    <name type="ORF">15</name>
</gene>
<organismHost>
    <name type="scientific">Galliformes</name>
    <dbReference type="NCBI Taxonomy" id="8976"/>
</organismHost>
<reference key="1">
    <citation type="journal article" date="1996" name="J. Virol.">
        <title>The complete DNA sequence and genomic organization of the avian adenovirus CELO.</title>
        <authorList>
            <person name="Chiocca S."/>
            <person name="Kurzbauer R."/>
            <person name="Schaffner G."/>
            <person name="Baker A."/>
            <person name="Mautner V."/>
            <person name="Cotten M."/>
        </authorList>
    </citation>
    <scope>NUCLEOTIDE SEQUENCE [LARGE SCALE GENOMIC DNA]</scope>
</reference>
<keyword id="KW-1185">Reference proteome</keyword>
<evidence type="ECO:0000256" key="1">
    <source>
        <dbReference type="SAM" id="MobiDB-lite"/>
    </source>
</evidence>
<sequence>MVASCHTLTIIPKEARSNCYRAYSRASCWCCLRTDNVRMCRRPPQNLLASVQRSRLRRKGPINGNQGSAIPTQSADCGLQHPYLWTRNPTPRGLSRLAASVPTAPEP</sequence>
<feature type="chain" id="PRO_0000338994" description="Uncharacterized protein ORF15">
    <location>
        <begin position="1"/>
        <end position="107"/>
    </location>
</feature>
<feature type="region of interest" description="Disordered" evidence="1">
    <location>
        <begin position="51"/>
        <end position="75"/>
    </location>
</feature>
<feature type="region of interest" description="Disordered" evidence="1">
    <location>
        <begin position="88"/>
        <end position="107"/>
    </location>
</feature>
<feature type="compositionally biased region" description="Polar residues" evidence="1">
    <location>
        <begin position="63"/>
        <end position="75"/>
    </location>
</feature>
<accession>Q64744</accession>
<proteinExistence type="predicted"/>
<dbReference type="EMBL" id="U46933">
    <property type="protein sequence ID" value="AAC54896.1"/>
    <property type="molecule type" value="Genomic_DNA"/>
</dbReference>
<dbReference type="RefSeq" id="NP_043870.1">
    <property type="nucleotide sequence ID" value="NC_001720.1"/>
</dbReference>
<dbReference type="KEGG" id="vg:1733475"/>
<dbReference type="Proteomes" id="UP000001594">
    <property type="component" value="Segment"/>
</dbReference>